<comment type="function">
    <text evidence="1">This protein binds to the 23S rRNA, and is important in its secondary structure. It is located near the subunit interface in the base of the L7/L12 stalk, and near the tRNA binding site of the peptidyltransferase center.</text>
</comment>
<comment type="subunit">
    <text evidence="1">Part of the 50S ribosomal subunit.</text>
</comment>
<comment type="similarity">
    <text evidence="1">Belongs to the universal ribosomal protein uL6 family.</text>
</comment>
<accession>A5UHU6</accession>
<keyword id="KW-0687">Ribonucleoprotein</keyword>
<keyword id="KW-0689">Ribosomal protein</keyword>
<keyword id="KW-0694">RNA-binding</keyword>
<keyword id="KW-0699">rRNA-binding</keyword>
<proteinExistence type="inferred from homology"/>
<name>RL6_HAEIG</name>
<evidence type="ECO:0000255" key="1">
    <source>
        <dbReference type="HAMAP-Rule" id="MF_01365"/>
    </source>
</evidence>
<evidence type="ECO:0000305" key="2"/>
<sequence>MSRVAKAPVNIPAGVEVKLDGQLLTVKGKNGELSRKIHESVEVKQDNGQFTFTPREGFVEANAQSGTARALVNAMVIGVTEGFTKKLVLVGVGYRAQLKGNAIALSLGYSHPVEHTLPVGITAECPSQTEIVLKGADKQLIGQVAADIRAYRRPEPYKGKGVRYADEVVRIKEAKKK</sequence>
<gene>
    <name evidence="1" type="primary">rplF</name>
    <name type="ordered locus">CGSHiGG_07465</name>
</gene>
<dbReference type="EMBL" id="CP000672">
    <property type="protein sequence ID" value="ABR00352.1"/>
    <property type="molecule type" value="Genomic_DNA"/>
</dbReference>
<dbReference type="SMR" id="A5UHU6"/>
<dbReference type="KEGG" id="hiq:CGSHiGG_07465"/>
<dbReference type="HOGENOM" id="CLU_065464_1_2_6"/>
<dbReference type="Proteomes" id="UP000001990">
    <property type="component" value="Chromosome"/>
</dbReference>
<dbReference type="GO" id="GO:0022625">
    <property type="term" value="C:cytosolic large ribosomal subunit"/>
    <property type="evidence" value="ECO:0007669"/>
    <property type="project" value="TreeGrafter"/>
</dbReference>
<dbReference type="GO" id="GO:0019843">
    <property type="term" value="F:rRNA binding"/>
    <property type="evidence" value="ECO:0007669"/>
    <property type="project" value="UniProtKB-UniRule"/>
</dbReference>
<dbReference type="GO" id="GO:0003735">
    <property type="term" value="F:structural constituent of ribosome"/>
    <property type="evidence" value="ECO:0007669"/>
    <property type="project" value="InterPro"/>
</dbReference>
<dbReference type="GO" id="GO:0002181">
    <property type="term" value="P:cytoplasmic translation"/>
    <property type="evidence" value="ECO:0007669"/>
    <property type="project" value="TreeGrafter"/>
</dbReference>
<dbReference type="FunFam" id="3.90.930.12:FF:000001">
    <property type="entry name" value="50S ribosomal protein L6"/>
    <property type="match status" value="1"/>
</dbReference>
<dbReference type="FunFam" id="3.90.930.12:FF:000002">
    <property type="entry name" value="50S ribosomal protein L6"/>
    <property type="match status" value="1"/>
</dbReference>
<dbReference type="Gene3D" id="3.90.930.12">
    <property type="entry name" value="Ribosomal protein L6, alpha-beta domain"/>
    <property type="match status" value="2"/>
</dbReference>
<dbReference type="HAMAP" id="MF_01365_B">
    <property type="entry name" value="Ribosomal_uL6_B"/>
    <property type="match status" value="1"/>
</dbReference>
<dbReference type="InterPro" id="IPR000702">
    <property type="entry name" value="Ribosomal_uL6-like"/>
</dbReference>
<dbReference type="InterPro" id="IPR036789">
    <property type="entry name" value="Ribosomal_uL6-like_a/b-dom_sf"/>
</dbReference>
<dbReference type="InterPro" id="IPR020040">
    <property type="entry name" value="Ribosomal_uL6_a/b-dom"/>
</dbReference>
<dbReference type="InterPro" id="IPR019906">
    <property type="entry name" value="Ribosomal_uL6_bac-type"/>
</dbReference>
<dbReference type="InterPro" id="IPR002358">
    <property type="entry name" value="Ribosomal_uL6_CS"/>
</dbReference>
<dbReference type="NCBIfam" id="TIGR03654">
    <property type="entry name" value="L6_bact"/>
    <property type="match status" value="1"/>
</dbReference>
<dbReference type="PANTHER" id="PTHR11655">
    <property type="entry name" value="60S/50S RIBOSOMAL PROTEIN L6/L9"/>
    <property type="match status" value="1"/>
</dbReference>
<dbReference type="PANTHER" id="PTHR11655:SF14">
    <property type="entry name" value="LARGE RIBOSOMAL SUBUNIT PROTEIN UL6M"/>
    <property type="match status" value="1"/>
</dbReference>
<dbReference type="Pfam" id="PF00347">
    <property type="entry name" value="Ribosomal_L6"/>
    <property type="match status" value="2"/>
</dbReference>
<dbReference type="PIRSF" id="PIRSF002162">
    <property type="entry name" value="Ribosomal_L6"/>
    <property type="match status" value="1"/>
</dbReference>
<dbReference type="PRINTS" id="PR00059">
    <property type="entry name" value="RIBOSOMALL6"/>
</dbReference>
<dbReference type="SUPFAM" id="SSF56053">
    <property type="entry name" value="Ribosomal protein L6"/>
    <property type="match status" value="2"/>
</dbReference>
<dbReference type="PROSITE" id="PS00525">
    <property type="entry name" value="RIBOSOMAL_L6_1"/>
    <property type="match status" value="1"/>
</dbReference>
<protein>
    <recommendedName>
        <fullName evidence="1">Large ribosomal subunit protein uL6</fullName>
    </recommendedName>
    <alternativeName>
        <fullName evidence="2">50S ribosomal protein L6</fullName>
    </alternativeName>
</protein>
<organism>
    <name type="scientific">Haemophilus influenzae (strain PittGG)</name>
    <dbReference type="NCBI Taxonomy" id="374931"/>
    <lineage>
        <taxon>Bacteria</taxon>
        <taxon>Pseudomonadati</taxon>
        <taxon>Pseudomonadota</taxon>
        <taxon>Gammaproteobacteria</taxon>
        <taxon>Pasteurellales</taxon>
        <taxon>Pasteurellaceae</taxon>
        <taxon>Haemophilus</taxon>
    </lineage>
</organism>
<feature type="chain" id="PRO_1000055237" description="Large ribosomal subunit protein uL6">
    <location>
        <begin position="1"/>
        <end position="177"/>
    </location>
</feature>
<reference key="1">
    <citation type="journal article" date="2007" name="Genome Biol.">
        <title>Characterization and modeling of the Haemophilus influenzae core and supragenomes based on the complete genomic sequences of Rd and 12 clinical nontypeable strains.</title>
        <authorList>
            <person name="Hogg J.S."/>
            <person name="Hu F.Z."/>
            <person name="Janto B."/>
            <person name="Boissy R."/>
            <person name="Hayes J."/>
            <person name="Keefe R."/>
            <person name="Post J.C."/>
            <person name="Ehrlich G.D."/>
        </authorList>
    </citation>
    <scope>NUCLEOTIDE SEQUENCE [LARGE SCALE GENOMIC DNA]</scope>
    <source>
        <strain>PittGG</strain>
    </source>
</reference>